<reference key="1">
    <citation type="journal article" date="2000" name="Nature">
        <title>Sequence and analysis of chromosome 1 of the plant Arabidopsis thaliana.</title>
        <authorList>
            <person name="Theologis A."/>
            <person name="Ecker J.R."/>
            <person name="Palm C.J."/>
            <person name="Federspiel N.A."/>
            <person name="Kaul S."/>
            <person name="White O."/>
            <person name="Alonso J."/>
            <person name="Altafi H."/>
            <person name="Araujo R."/>
            <person name="Bowman C.L."/>
            <person name="Brooks S.Y."/>
            <person name="Buehler E."/>
            <person name="Chan A."/>
            <person name="Chao Q."/>
            <person name="Chen H."/>
            <person name="Cheuk R.F."/>
            <person name="Chin C.W."/>
            <person name="Chung M.K."/>
            <person name="Conn L."/>
            <person name="Conway A.B."/>
            <person name="Conway A.R."/>
            <person name="Creasy T.H."/>
            <person name="Dewar K."/>
            <person name="Dunn P."/>
            <person name="Etgu P."/>
            <person name="Feldblyum T.V."/>
            <person name="Feng J.-D."/>
            <person name="Fong B."/>
            <person name="Fujii C.Y."/>
            <person name="Gill J.E."/>
            <person name="Goldsmith A.D."/>
            <person name="Haas B."/>
            <person name="Hansen N.F."/>
            <person name="Hughes B."/>
            <person name="Huizar L."/>
            <person name="Hunter J.L."/>
            <person name="Jenkins J."/>
            <person name="Johnson-Hopson C."/>
            <person name="Khan S."/>
            <person name="Khaykin E."/>
            <person name="Kim C.J."/>
            <person name="Koo H.L."/>
            <person name="Kremenetskaia I."/>
            <person name="Kurtz D.B."/>
            <person name="Kwan A."/>
            <person name="Lam B."/>
            <person name="Langin-Hooper S."/>
            <person name="Lee A."/>
            <person name="Lee J.M."/>
            <person name="Lenz C.A."/>
            <person name="Li J.H."/>
            <person name="Li Y.-P."/>
            <person name="Lin X."/>
            <person name="Liu S.X."/>
            <person name="Liu Z.A."/>
            <person name="Luros J.S."/>
            <person name="Maiti R."/>
            <person name="Marziali A."/>
            <person name="Militscher J."/>
            <person name="Miranda M."/>
            <person name="Nguyen M."/>
            <person name="Nierman W.C."/>
            <person name="Osborne B.I."/>
            <person name="Pai G."/>
            <person name="Peterson J."/>
            <person name="Pham P.K."/>
            <person name="Rizzo M."/>
            <person name="Rooney T."/>
            <person name="Rowley D."/>
            <person name="Sakano H."/>
            <person name="Salzberg S.L."/>
            <person name="Schwartz J.R."/>
            <person name="Shinn P."/>
            <person name="Southwick A.M."/>
            <person name="Sun H."/>
            <person name="Tallon L.J."/>
            <person name="Tambunga G."/>
            <person name="Toriumi M.J."/>
            <person name="Town C.D."/>
            <person name="Utterback T."/>
            <person name="Van Aken S."/>
            <person name="Vaysberg M."/>
            <person name="Vysotskaia V.S."/>
            <person name="Walker M."/>
            <person name="Wu D."/>
            <person name="Yu G."/>
            <person name="Fraser C.M."/>
            <person name="Venter J.C."/>
            <person name="Davis R.W."/>
        </authorList>
    </citation>
    <scope>NUCLEOTIDE SEQUENCE [LARGE SCALE GENOMIC DNA]</scope>
    <source>
        <strain>cv. Columbia</strain>
    </source>
</reference>
<reference key="2">
    <citation type="journal article" date="2017" name="Plant J.">
        <title>Araport11: a complete reannotation of the Arabidopsis thaliana reference genome.</title>
        <authorList>
            <person name="Cheng C.Y."/>
            <person name="Krishnakumar V."/>
            <person name="Chan A.P."/>
            <person name="Thibaud-Nissen F."/>
            <person name="Schobel S."/>
            <person name="Town C.D."/>
        </authorList>
    </citation>
    <scope>GENOME REANNOTATION</scope>
    <source>
        <strain>cv. Columbia</strain>
    </source>
</reference>
<reference key="3">
    <citation type="journal article" date="2003" name="Science">
        <title>Empirical analysis of transcriptional activity in the Arabidopsis genome.</title>
        <authorList>
            <person name="Yamada K."/>
            <person name="Lim J."/>
            <person name="Dale J.M."/>
            <person name="Chen H."/>
            <person name="Shinn P."/>
            <person name="Palm C.J."/>
            <person name="Southwick A.M."/>
            <person name="Wu H.C."/>
            <person name="Kim C.J."/>
            <person name="Nguyen M."/>
            <person name="Pham P.K."/>
            <person name="Cheuk R.F."/>
            <person name="Karlin-Newmann G."/>
            <person name="Liu S.X."/>
            <person name="Lam B."/>
            <person name="Sakano H."/>
            <person name="Wu T."/>
            <person name="Yu G."/>
            <person name="Miranda M."/>
            <person name="Quach H.L."/>
            <person name="Tripp M."/>
            <person name="Chang C.H."/>
            <person name="Lee J.M."/>
            <person name="Toriumi M.J."/>
            <person name="Chan M.M."/>
            <person name="Tang C.C."/>
            <person name="Onodera C.S."/>
            <person name="Deng J.M."/>
            <person name="Akiyama K."/>
            <person name="Ansari Y."/>
            <person name="Arakawa T."/>
            <person name="Banh J."/>
            <person name="Banno F."/>
            <person name="Bowser L."/>
            <person name="Brooks S.Y."/>
            <person name="Carninci P."/>
            <person name="Chao Q."/>
            <person name="Choy N."/>
            <person name="Enju A."/>
            <person name="Goldsmith A.D."/>
            <person name="Gurjal M."/>
            <person name="Hansen N.F."/>
            <person name="Hayashizaki Y."/>
            <person name="Johnson-Hopson C."/>
            <person name="Hsuan V.W."/>
            <person name="Iida K."/>
            <person name="Karnes M."/>
            <person name="Khan S."/>
            <person name="Koesema E."/>
            <person name="Ishida J."/>
            <person name="Jiang P.X."/>
            <person name="Jones T."/>
            <person name="Kawai J."/>
            <person name="Kamiya A."/>
            <person name="Meyers C."/>
            <person name="Nakajima M."/>
            <person name="Narusaka M."/>
            <person name="Seki M."/>
            <person name="Sakurai T."/>
            <person name="Satou M."/>
            <person name="Tamse R."/>
            <person name="Vaysberg M."/>
            <person name="Wallender E.K."/>
            <person name="Wong C."/>
            <person name="Yamamura Y."/>
            <person name="Yuan S."/>
            <person name="Shinozaki K."/>
            <person name="Davis R.W."/>
            <person name="Theologis A."/>
            <person name="Ecker J.R."/>
        </authorList>
    </citation>
    <scope>NUCLEOTIDE SEQUENCE [LARGE SCALE MRNA]</scope>
    <source>
        <strain>cv. Columbia</strain>
    </source>
</reference>
<reference key="4">
    <citation type="journal article" date="2010" name="BMC Genomics">
        <title>Genome-wide cloning and sequence analysis of leucine-rich repeat receptor-like protein kinase genes in Arabidopsis thaliana.</title>
        <authorList>
            <person name="Gou X."/>
            <person name="He K."/>
            <person name="Yang H."/>
            <person name="Yuan T."/>
            <person name="Lin H."/>
            <person name="Clouse S.D."/>
            <person name="Li J."/>
        </authorList>
    </citation>
    <scope>NUCLEOTIDE SEQUENCE [LARGE SCALE MRNA]</scope>
    <source>
        <strain>cv. Columbia</strain>
    </source>
</reference>
<reference key="5">
    <citation type="journal article" date="2004" name="Genes Dev.">
        <title>The geminivirus nuclear shuttle protein is a virulence factor that suppresses transmembrane receptor kinase activity.</title>
        <authorList>
            <person name="Fontes E.P."/>
            <person name="Santos A.A."/>
            <person name="Luz D.F."/>
            <person name="Waclawovsky A.J."/>
            <person name="Chory J."/>
        </authorList>
    </citation>
    <scope>FUNCTION</scope>
    <scope>INTERACTION WITH CABBAGE LEAF CURL VIRUS NSP</scope>
    <scope>SUBCELLULAR LOCATION</scope>
    <scope>ACTIVITY REGULATION</scope>
    <scope>AUTOPHOSPHORYLATION</scope>
    <scope>TISSUE SPECIFICITY</scope>
    <scope>DISRUPTION PHENOTYPE</scope>
</reference>
<feature type="signal peptide" evidence="5">
    <location>
        <begin position="1"/>
        <end position="25"/>
    </location>
</feature>
<feature type="chain" id="PRO_0000409727" description="Protein NSP-INTERACTING KINASE 3">
    <location>
        <begin position="26"/>
        <end position="632"/>
    </location>
</feature>
<feature type="topological domain" description="Extracellular" evidence="5">
    <location>
        <begin position="26"/>
        <end position="238"/>
    </location>
</feature>
<feature type="transmembrane region" description="Helical" evidence="5">
    <location>
        <begin position="239"/>
        <end position="259"/>
    </location>
</feature>
<feature type="topological domain" description="Cytoplasmic" evidence="5">
    <location>
        <begin position="260"/>
        <end position="632"/>
    </location>
</feature>
<feature type="repeat" description="LRR 1">
    <location>
        <begin position="97"/>
        <end position="121"/>
    </location>
</feature>
<feature type="repeat" description="LRR 2">
    <location>
        <begin position="122"/>
        <end position="145"/>
    </location>
</feature>
<feature type="repeat" description="LRR 3">
    <location>
        <begin position="147"/>
        <end position="168"/>
    </location>
</feature>
<feature type="repeat" description="LRR 4">
    <location>
        <begin position="169"/>
        <end position="193"/>
    </location>
</feature>
<feature type="domain" description="Protein kinase" evidence="6">
    <location>
        <begin position="301"/>
        <end position="584"/>
    </location>
</feature>
<feature type="region of interest" description="Interaction with geminivirus NSP protein" evidence="1">
    <location>
        <begin position="415"/>
        <end position="495"/>
    </location>
</feature>
<feature type="active site" description="Proton acceptor" evidence="6 7">
    <location>
        <position position="428"/>
    </location>
</feature>
<feature type="binding site" evidence="6">
    <location>
        <begin position="307"/>
        <end position="315"/>
    </location>
    <ligand>
        <name>ATP</name>
        <dbReference type="ChEBI" id="CHEBI:30616"/>
    </ligand>
</feature>
<feature type="binding site" evidence="6">
    <location>
        <position position="329"/>
    </location>
    <ligand>
        <name>ATP</name>
        <dbReference type="ChEBI" id="CHEBI:30616"/>
    </ligand>
</feature>
<feature type="modified residue" description="Phosphothreonine" evidence="4">
    <location>
        <position position="298"/>
    </location>
</feature>
<feature type="modified residue" description="Phosphothreonine" evidence="3">
    <location>
        <position position="324"/>
    </location>
</feature>
<feature type="modified residue" description="Phosphoserine" evidence="2">
    <location>
        <position position="382"/>
    </location>
</feature>
<feature type="modified residue" description="Phosphoserine" evidence="4">
    <location>
        <position position="385"/>
    </location>
</feature>
<feature type="modified residue" description="Phosphothreonine" evidence="3">
    <location>
        <position position="461"/>
    </location>
</feature>
<feature type="modified residue" description="Phosphothreonine" evidence="3">
    <location>
        <position position="462"/>
    </location>
</feature>
<feature type="modified residue" description="Phosphothreonine" evidence="3">
    <location>
        <position position="467"/>
    </location>
</feature>
<feature type="modified residue" description="Phosphotyrosine" evidence="2">
    <location>
        <position position="475"/>
    </location>
</feature>
<feature type="modified residue" description="Phosphoserine" evidence="2">
    <location>
        <position position="477"/>
    </location>
</feature>
<feature type="modified residue" description="Phosphothreonine" evidence="2">
    <location>
        <position position="478"/>
    </location>
</feature>
<feature type="modified residue" description="Phosphoserine" evidence="2">
    <location>
        <position position="482"/>
    </location>
</feature>
<feature type="modified residue" description="Phosphothreonine" evidence="2">
    <location>
        <position position="557"/>
    </location>
</feature>
<feature type="glycosylation site" description="N-linked (GlcNAc...) asparagine" evidence="5">
    <location>
        <position position="96"/>
    </location>
</feature>
<feature type="glycosylation site" description="N-linked (GlcNAc...) asparagine" evidence="5">
    <location>
        <position position="131"/>
    </location>
</feature>
<feature type="glycosylation site" description="N-linked (GlcNAc...) asparagine" evidence="5">
    <location>
        <position position="155"/>
    </location>
</feature>
<feature type="glycosylation site" description="N-linked (GlcNAc...) asparagine" evidence="5">
    <location>
        <position position="181"/>
    </location>
</feature>
<feature type="glycosylation site" description="N-linked (GlcNAc...) asparagine" evidence="5">
    <location>
        <position position="210"/>
    </location>
</feature>
<sequence>MEGVRFVVWRLGFLVFVWFFDISSATLSPTGVNYEVTALVAVKNELNDPYKVLENWDVNSVDPCSWRMVSCTDGYVSSLDLPSQSLSGTLSPRIGNLTYLQSVVLQNNAITGPIPETIGRLEKLQSLDLSNNSFTGEIPASLGELKNLNYLRLNNNSLIGTCPESLSKIEGLTLVDISYNNLSGSLPKVSARTFKVIGNALICGPKAVSNCSAVPEPLTLPQDGPDESGTRTNGHHVALAFAASFSAAFFVFFTSGMFLWWRYRRNKQIFFDVNEQYDPEVSLGHLKRYTFKELRSATNHFNSKNILGRGGYGIVYKGHLNDGTLVAVKRLKDCNIAGGEVQFQTEVETISLALHRNLLRLRGFCSSNQERILVYPYMPNGSVASRLKDNIRGEPALDWSRRKKIAVGTARGLVYLHEQCDPKIIHRDVKAANILLDEDFEAVVGDFGLAKLLDHRDSHVTTAVRGTVGHIAPEYLSTGQSSEKTDVFGFGILLLELITGQKALDFGRSAHQKGVMLDWVKKLHQEGKLKQLIDKDLNDKFDRVELEEIVQVALLCTQFNPSHRPKMSEVMKMLEGDGLAERWEATQNGTGEHQPPPLPPGMVSSSPRVRYYSDYIQESSLVVEAIELSGPR</sequence>
<protein>
    <recommendedName>
        <fullName>Protein NSP-INTERACTING KINASE 3</fullName>
        <ecNumber>2.7.11.1</ecNumber>
    </recommendedName>
    <alternativeName>
        <fullName>LRR receptor-like serine/threonine-protein kinase NIK3</fullName>
    </alternativeName>
</protein>
<proteinExistence type="evidence at protein level"/>
<evidence type="ECO:0000250" key="1"/>
<evidence type="ECO:0000250" key="2">
    <source>
        <dbReference type="UniProtKB" id="Q94AG2"/>
    </source>
</evidence>
<evidence type="ECO:0000250" key="3">
    <source>
        <dbReference type="UniProtKB" id="Q94F62"/>
    </source>
</evidence>
<evidence type="ECO:0000250" key="4">
    <source>
        <dbReference type="UniProtKB" id="Q9LSI9"/>
    </source>
</evidence>
<evidence type="ECO:0000255" key="5"/>
<evidence type="ECO:0000255" key="6">
    <source>
        <dbReference type="PROSITE-ProRule" id="PRU00159"/>
    </source>
</evidence>
<evidence type="ECO:0000255" key="7">
    <source>
        <dbReference type="PROSITE-ProRule" id="PRU10027"/>
    </source>
</evidence>
<evidence type="ECO:0000269" key="8">
    <source>
    </source>
</evidence>
<evidence type="ECO:0000305" key="9"/>
<accession>Q93ZS4</accession>
<accession>O22717</accession>
<comment type="function">
    <text evidence="8">Involved in defense response to geminivirus infection.</text>
</comment>
<comment type="catalytic activity">
    <reaction>
        <text>L-seryl-[protein] + ATP = O-phospho-L-seryl-[protein] + ADP + H(+)</text>
        <dbReference type="Rhea" id="RHEA:17989"/>
        <dbReference type="Rhea" id="RHEA-COMP:9863"/>
        <dbReference type="Rhea" id="RHEA-COMP:11604"/>
        <dbReference type="ChEBI" id="CHEBI:15378"/>
        <dbReference type="ChEBI" id="CHEBI:29999"/>
        <dbReference type="ChEBI" id="CHEBI:30616"/>
        <dbReference type="ChEBI" id="CHEBI:83421"/>
        <dbReference type="ChEBI" id="CHEBI:456216"/>
        <dbReference type="EC" id="2.7.11.1"/>
    </reaction>
</comment>
<comment type="catalytic activity">
    <reaction>
        <text>L-threonyl-[protein] + ATP = O-phospho-L-threonyl-[protein] + ADP + H(+)</text>
        <dbReference type="Rhea" id="RHEA:46608"/>
        <dbReference type="Rhea" id="RHEA-COMP:11060"/>
        <dbReference type="Rhea" id="RHEA-COMP:11605"/>
        <dbReference type="ChEBI" id="CHEBI:15378"/>
        <dbReference type="ChEBI" id="CHEBI:30013"/>
        <dbReference type="ChEBI" id="CHEBI:30616"/>
        <dbReference type="ChEBI" id="CHEBI:61977"/>
        <dbReference type="ChEBI" id="CHEBI:456216"/>
        <dbReference type="EC" id="2.7.11.1"/>
    </reaction>
</comment>
<comment type="activity regulation">
    <text evidence="8">Inhibited by the viral nuclear shuttle protein (NSP) that binds to the region required for oligomerization.</text>
</comment>
<comment type="subunit">
    <text evidence="8">Oligomer. Interacts with geminivirus nuclear shuttle protein (NSP).</text>
</comment>
<comment type="interaction">
    <interactant intactId="EBI-17121474">
        <id>Q93ZS4</id>
    </interactant>
    <interactant intactId="EBI-16954682">
        <id>Q9M9S4</id>
        <label>At1g14390</label>
    </interactant>
    <organismsDiffer>false</organismsDiffer>
    <experiments>2</experiments>
</comment>
<comment type="interaction">
    <interactant intactId="EBI-17121474">
        <id>Q93ZS4</id>
    </interactant>
    <interactant intactId="EBI-20653376">
        <id>Q9FZB8-2</id>
        <label>At1g51810</label>
    </interactant>
    <organismsDiffer>false</organismsDiffer>
    <experiments>2</experiments>
</comment>
<comment type="interaction">
    <interactant intactId="EBI-17121474">
        <id>Q93ZS4</id>
    </interactant>
    <interactant intactId="EBI-20651385">
        <id>Q9SH71</id>
        <label>At1g64210</label>
    </interactant>
    <organismsDiffer>false</organismsDiffer>
    <experiments>2</experiments>
</comment>
<comment type="interaction">
    <interactant intactId="EBI-17121474">
        <id>Q93ZS4</id>
    </interactant>
    <interactant intactId="EBI-1238661">
        <id>Q9M9C5</id>
        <label>At1g68400</label>
    </interactant>
    <organismsDiffer>false</organismsDiffer>
    <experiments>3</experiments>
</comment>
<comment type="interaction">
    <interactant intactId="EBI-17121474">
        <id>Q93ZS4</id>
    </interactant>
    <interactant intactId="EBI-20651541">
        <id>C0LGJ9</id>
        <label>At2g02780</label>
    </interactant>
    <organismsDiffer>false</organismsDiffer>
    <experiments>2</experiments>
</comment>
<comment type="interaction">
    <interactant intactId="EBI-17121474">
        <id>Q93ZS4</id>
    </interactant>
    <interactant intactId="EBI-16946048">
        <id>C0LGL4</id>
        <label>At2g28960</label>
    </interactant>
    <organismsDiffer>false</organismsDiffer>
    <experiments>2</experiments>
</comment>
<comment type="interaction">
    <interactant intactId="EBI-17121474">
        <id>Q93ZS4</id>
    </interactant>
    <interactant intactId="EBI-1238677">
        <id>Q9M8T0</id>
        <label>At3g02880</label>
    </interactant>
    <organismsDiffer>false</organismsDiffer>
    <experiments>2</experiments>
</comment>
<comment type="interaction">
    <interactant intactId="EBI-17121474">
        <id>Q93ZS4</id>
    </interactant>
    <interactant intactId="EBI-17121875">
        <id>C0LGQ7</id>
        <label>At4g20450</label>
    </interactant>
    <organismsDiffer>false</organismsDiffer>
    <experiments>2</experiments>
</comment>
<comment type="interaction">
    <interactant intactId="EBI-17121474">
        <id>Q93ZS4</id>
    </interactant>
    <interactant intactId="EBI-20657062">
        <id>Q9FL63</id>
        <label>At5g24100</label>
    </interactant>
    <organismsDiffer>false</organismsDiffer>
    <experiments>3</experiments>
</comment>
<comment type="interaction">
    <interactant intactId="EBI-17121474">
        <id>Q93ZS4</id>
    </interactant>
    <interactant intactId="EBI-17091250">
        <id>C0LGV0</id>
        <label>At5g48740</label>
    </interactant>
    <organismsDiffer>false</organismsDiffer>
    <experiments>2</experiments>
</comment>
<comment type="interaction">
    <interactant intactId="EBI-17121474">
        <id>Q93ZS4</id>
    </interactant>
    <interactant intactId="EBI-20653342">
        <id>A0A178UFM8</id>
        <label>At5g51560</label>
    </interactant>
    <organismsDiffer>false</organismsDiffer>
    <experiments>3</experiments>
</comment>
<comment type="interaction">
    <interactant intactId="EBI-17121474">
        <id>Q93ZS4</id>
    </interactant>
    <interactant intactId="EBI-16905069">
        <id>C0LGQ5</id>
        <label>GSO1</label>
    </interactant>
    <organismsDiffer>false</organismsDiffer>
    <experiments>2</experiments>
</comment>
<comment type="interaction">
    <interactant intactId="EBI-17121474">
        <id>Q93ZS4</id>
    </interactant>
    <interactant intactId="EBI-20657203">
        <id>C0LGP3</id>
        <label>LRR-RLK</label>
    </interactant>
    <organismsDiffer>false</organismsDiffer>
    <experiments>3</experiments>
</comment>
<comment type="interaction">
    <interactant intactId="EBI-17121474">
        <id>Q93ZS4</id>
    </interactant>
    <interactant intactId="EBI-16196163">
        <id>C0LGU7</id>
        <label>MDIS1</label>
    </interactant>
    <organismsDiffer>false</organismsDiffer>
    <experiments>2</experiments>
</comment>
<comment type="interaction">
    <interactant intactId="EBI-17121474">
        <id>Q93ZS4</id>
    </interactant>
    <interactant intactId="EBI-16914444">
        <id>Q9LJY0</id>
        <label>PRK4</label>
    </interactant>
    <organismsDiffer>false</organismsDiffer>
    <experiments>2</experiments>
</comment>
<comment type="interaction">
    <interactant intactId="EBI-17121474">
        <id>Q93ZS4</id>
    </interactant>
    <interactant intactId="EBI-20657264">
        <id>Q3E991</id>
        <label>PRK6</label>
    </interactant>
    <organismsDiffer>false</organismsDiffer>
    <experiments>2</experiments>
</comment>
<comment type="interaction">
    <interactant intactId="EBI-17121474">
        <id>Q93ZS4</id>
    </interactant>
    <interactant intactId="EBI-1626936">
        <id>Q9LVI6</id>
        <label>RLK902</label>
    </interactant>
    <organismsDiffer>false</organismsDiffer>
    <experiments>2</experiments>
</comment>
<comment type="interaction">
    <interactant intactId="EBI-17121474">
        <id>Q93ZS4</id>
    </interactant>
    <interactant intactId="EBI-6299033">
        <id>Q9XIC7</id>
        <label>SERK2</label>
    </interactant>
    <organismsDiffer>false</organismsDiffer>
    <experiments>4</experiments>
</comment>
<comment type="interaction">
    <interactant intactId="EBI-17121474">
        <id>Q93ZS4</id>
    </interactant>
    <interactant intactId="EBI-20657109">
        <id>Q9M2R4</id>
        <label>T10K17.40</label>
    </interactant>
    <organismsDiffer>false</organismsDiffer>
    <experiments>3</experiments>
</comment>
<comment type="subcellular location">
    <subcellularLocation>
        <location evidence="8">Cell membrane</location>
        <topology evidence="8">Single-pass type I membrane protein</topology>
    </subcellularLocation>
</comment>
<comment type="tissue specificity">
    <text evidence="8">Expressed in seedlings, leaves and flowers.</text>
</comment>
<comment type="PTM">
    <text>Autophosphorylated.</text>
</comment>
<comment type="disruption phenotype">
    <text evidence="8">Enhanced susceptibility to geminivirus infection.</text>
</comment>
<comment type="similarity">
    <text evidence="6">Belongs to the protein kinase superfamily. Ser/Thr protein kinase family.</text>
</comment>
<comment type="sequence caution" evidence="9">
    <conflict type="erroneous gene model prediction">
        <sequence resource="EMBL-CDS" id="AAB71968"/>
    </conflict>
</comment>
<dbReference type="EC" id="2.7.11.1"/>
<dbReference type="EMBL" id="AC002292">
    <property type="protein sequence ID" value="AAB71968.1"/>
    <property type="status" value="ALT_SEQ"/>
    <property type="molecule type" value="Genomic_DNA"/>
</dbReference>
<dbReference type="EMBL" id="CP002684">
    <property type="protein sequence ID" value="AEE33734.1"/>
    <property type="molecule type" value="Genomic_DNA"/>
</dbReference>
<dbReference type="EMBL" id="AY056294">
    <property type="protein sequence ID" value="AAL07143.1"/>
    <property type="molecule type" value="mRNA"/>
</dbReference>
<dbReference type="EMBL" id="AY150495">
    <property type="protein sequence ID" value="AAN12912.1"/>
    <property type="molecule type" value="mRNA"/>
</dbReference>
<dbReference type="EMBL" id="FJ708666">
    <property type="protein sequence ID" value="ACN59261.1"/>
    <property type="molecule type" value="mRNA"/>
</dbReference>
<dbReference type="PIR" id="E96633">
    <property type="entry name" value="E96633"/>
</dbReference>
<dbReference type="RefSeq" id="NP_176279.1">
    <property type="nucleotide sequence ID" value="NM_104763.3"/>
</dbReference>
<dbReference type="SMR" id="Q93ZS4"/>
<dbReference type="BioGRID" id="27598">
    <property type="interactions" value="59"/>
</dbReference>
<dbReference type="FunCoup" id="Q93ZS4">
    <property type="interactions" value="651"/>
</dbReference>
<dbReference type="IntAct" id="Q93ZS4">
    <property type="interactions" value="78"/>
</dbReference>
<dbReference type="STRING" id="3702.Q93ZS4"/>
<dbReference type="GlyCosmos" id="Q93ZS4">
    <property type="glycosylation" value="5 sites, No reported glycans"/>
</dbReference>
<dbReference type="GlyGen" id="Q93ZS4">
    <property type="glycosylation" value="5 sites"/>
</dbReference>
<dbReference type="PaxDb" id="3702-AT1G60800.1"/>
<dbReference type="ProteomicsDB" id="249442"/>
<dbReference type="EnsemblPlants" id="AT1G60800.1">
    <property type="protein sequence ID" value="AT1G60800.1"/>
    <property type="gene ID" value="AT1G60800"/>
</dbReference>
<dbReference type="GeneID" id="842374"/>
<dbReference type="Gramene" id="AT1G60800.1">
    <property type="protein sequence ID" value="AT1G60800.1"/>
    <property type="gene ID" value="AT1G60800"/>
</dbReference>
<dbReference type="KEGG" id="ath:AT1G60800"/>
<dbReference type="Araport" id="AT1G60800"/>
<dbReference type="TAIR" id="AT1G60800">
    <property type="gene designation" value="NIK3"/>
</dbReference>
<dbReference type="eggNOG" id="ENOG502QVM7">
    <property type="taxonomic scope" value="Eukaryota"/>
</dbReference>
<dbReference type="HOGENOM" id="CLU_000288_92_7_1"/>
<dbReference type="InParanoid" id="Q93ZS4"/>
<dbReference type="OMA" id="CYPEVCL"/>
<dbReference type="OrthoDB" id="749055at2759"/>
<dbReference type="PhylomeDB" id="Q93ZS4"/>
<dbReference type="PRO" id="PR:Q93ZS4"/>
<dbReference type="Proteomes" id="UP000006548">
    <property type="component" value="Chromosome 1"/>
</dbReference>
<dbReference type="ExpressionAtlas" id="Q93ZS4">
    <property type="expression patterns" value="baseline and differential"/>
</dbReference>
<dbReference type="GO" id="GO:0005886">
    <property type="term" value="C:plasma membrane"/>
    <property type="evidence" value="ECO:0007669"/>
    <property type="project" value="UniProtKB-SubCell"/>
</dbReference>
<dbReference type="GO" id="GO:0005524">
    <property type="term" value="F:ATP binding"/>
    <property type="evidence" value="ECO:0007669"/>
    <property type="project" value="UniProtKB-KW"/>
</dbReference>
<dbReference type="GO" id="GO:0015026">
    <property type="term" value="F:coreceptor activity"/>
    <property type="evidence" value="ECO:0000316"/>
    <property type="project" value="TAIR"/>
</dbReference>
<dbReference type="GO" id="GO:0106310">
    <property type="term" value="F:protein serine kinase activity"/>
    <property type="evidence" value="ECO:0007669"/>
    <property type="project" value="RHEA"/>
</dbReference>
<dbReference type="GO" id="GO:0004674">
    <property type="term" value="F:protein serine/threonine kinase activity"/>
    <property type="evidence" value="ECO:0007669"/>
    <property type="project" value="UniProtKB-KW"/>
</dbReference>
<dbReference type="GO" id="GO:0048653">
    <property type="term" value="P:anther development"/>
    <property type="evidence" value="ECO:0000316"/>
    <property type="project" value="TAIR"/>
</dbReference>
<dbReference type="GO" id="GO:0006952">
    <property type="term" value="P:defense response"/>
    <property type="evidence" value="ECO:0007669"/>
    <property type="project" value="UniProtKB-KW"/>
</dbReference>
<dbReference type="GO" id="GO:0007639">
    <property type="term" value="P:homeostasis of number of meristem cells"/>
    <property type="evidence" value="ECO:0000316"/>
    <property type="project" value="TAIR"/>
</dbReference>
<dbReference type="FunFam" id="3.80.10.10:FF:000021">
    <property type="entry name" value="Putative LRR receptor-like serine/threonine-protein kinase"/>
    <property type="match status" value="1"/>
</dbReference>
<dbReference type="FunFam" id="3.30.200.20:FF:000015">
    <property type="entry name" value="Somatic embryogenesis receptor kinase 1"/>
    <property type="match status" value="1"/>
</dbReference>
<dbReference type="FunFam" id="1.10.510.10:FF:000016">
    <property type="entry name" value="Somatic embryogenesis receptor-like kinase 1"/>
    <property type="match status" value="1"/>
</dbReference>
<dbReference type="Gene3D" id="3.30.200.20">
    <property type="entry name" value="Phosphorylase Kinase, domain 1"/>
    <property type="match status" value="1"/>
</dbReference>
<dbReference type="Gene3D" id="3.80.10.10">
    <property type="entry name" value="Ribonuclease Inhibitor"/>
    <property type="match status" value="1"/>
</dbReference>
<dbReference type="Gene3D" id="1.10.510.10">
    <property type="entry name" value="Transferase(Phosphotransferase) domain 1"/>
    <property type="match status" value="1"/>
</dbReference>
<dbReference type="InterPro" id="IPR011009">
    <property type="entry name" value="Kinase-like_dom_sf"/>
</dbReference>
<dbReference type="InterPro" id="IPR001611">
    <property type="entry name" value="Leu-rich_rpt"/>
</dbReference>
<dbReference type="InterPro" id="IPR032675">
    <property type="entry name" value="LRR_dom_sf"/>
</dbReference>
<dbReference type="InterPro" id="IPR013210">
    <property type="entry name" value="LRR_N_plant-typ"/>
</dbReference>
<dbReference type="InterPro" id="IPR051824">
    <property type="entry name" value="LRR_Rcpt-Like_S/T_Kinase"/>
</dbReference>
<dbReference type="InterPro" id="IPR000719">
    <property type="entry name" value="Prot_kinase_dom"/>
</dbReference>
<dbReference type="InterPro" id="IPR017441">
    <property type="entry name" value="Protein_kinase_ATP_BS"/>
</dbReference>
<dbReference type="InterPro" id="IPR001245">
    <property type="entry name" value="Ser-Thr/Tyr_kinase_cat_dom"/>
</dbReference>
<dbReference type="InterPro" id="IPR008271">
    <property type="entry name" value="Ser/Thr_kinase_AS"/>
</dbReference>
<dbReference type="PANTHER" id="PTHR48006">
    <property type="entry name" value="LEUCINE-RICH REPEAT-CONTAINING PROTEIN DDB_G0281931-RELATED"/>
    <property type="match status" value="1"/>
</dbReference>
<dbReference type="PANTHER" id="PTHR48006:SF90">
    <property type="entry name" value="PROTEIN KINASE DOMAIN-CONTAINING PROTEIN"/>
    <property type="match status" value="1"/>
</dbReference>
<dbReference type="Pfam" id="PF13855">
    <property type="entry name" value="LRR_8"/>
    <property type="match status" value="1"/>
</dbReference>
<dbReference type="Pfam" id="PF08263">
    <property type="entry name" value="LRRNT_2"/>
    <property type="match status" value="1"/>
</dbReference>
<dbReference type="Pfam" id="PF07714">
    <property type="entry name" value="PK_Tyr_Ser-Thr"/>
    <property type="match status" value="1"/>
</dbReference>
<dbReference type="SMART" id="SM00220">
    <property type="entry name" value="S_TKc"/>
    <property type="match status" value="1"/>
</dbReference>
<dbReference type="SUPFAM" id="SSF52058">
    <property type="entry name" value="L domain-like"/>
    <property type="match status" value="1"/>
</dbReference>
<dbReference type="SUPFAM" id="SSF56112">
    <property type="entry name" value="Protein kinase-like (PK-like)"/>
    <property type="match status" value="1"/>
</dbReference>
<dbReference type="PROSITE" id="PS00107">
    <property type="entry name" value="PROTEIN_KINASE_ATP"/>
    <property type="match status" value="1"/>
</dbReference>
<dbReference type="PROSITE" id="PS50011">
    <property type="entry name" value="PROTEIN_KINASE_DOM"/>
    <property type="match status" value="1"/>
</dbReference>
<dbReference type="PROSITE" id="PS00108">
    <property type="entry name" value="PROTEIN_KINASE_ST"/>
    <property type="match status" value="1"/>
</dbReference>
<gene>
    <name type="primary">NIK3</name>
    <name type="ordered locus">At1g60800</name>
    <name type="ORF">F8A5.31</name>
</gene>
<name>NIK3_ARATH</name>
<keyword id="KW-0067">ATP-binding</keyword>
<keyword id="KW-1003">Cell membrane</keyword>
<keyword id="KW-0325">Glycoprotein</keyword>
<keyword id="KW-0945">Host-virus interaction</keyword>
<keyword id="KW-0418">Kinase</keyword>
<keyword id="KW-0433">Leucine-rich repeat</keyword>
<keyword id="KW-0472">Membrane</keyword>
<keyword id="KW-0547">Nucleotide-binding</keyword>
<keyword id="KW-0597">Phosphoprotein</keyword>
<keyword id="KW-0611">Plant defense</keyword>
<keyword id="KW-0675">Receptor</keyword>
<keyword id="KW-1185">Reference proteome</keyword>
<keyword id="KW-0677">Repeat</keyword>
<keyword id="KW-0723">Serine/threonine-protein kinase</keyword>
<keyword id="KW-0732">Signal</keyword>
<keyword id="KW-0808">Transferase</keyword>
<keyword id="KW-0812">Transmembrane</keyword>
<keyword id="KW-1133">Transmembrane helix</keyword>
<organism>
    <name type="scientific">Arabidopsis thaliana</name>
    <name type="common">Mouse-ear cress</name>
    <dbReference type="NCBI Taxonomy" id="3702"/>
    <lineage>
        <taxon>Eukaryota</taxon>
        <taxon>Viridiplantae</taxon>
        <taxon>Streptophyta</taxon>
        <taxon>Embryophyta</taxon>
        <taxon>Tracheophyta</taxon>
        <taxon>Spermatophyta</taxon>
        <taxon>Magnoliopsida</taxon>
        <taxon>eudicotyledons</taxon>
        <taxon>Gunneridae</taxon>
        <taxon>Pentapetalae</taxon>
        <taxon>rosids</taxon>
        <taxon>malvids</taxon>
        <taxon>Brassicales</taxon>
        <taxon>Brassicaceae</taxon>
        <taxon>Camelineae</taxon>
        <taxon>Arabidopsis</taxon>
    </lineage>
</organism>